<sequence length="491" mass="57147">MVYRNRSKSVLSTHSKKSDDKAHYKSRSKKKSKSRSKKRLRIYWRYISIVWILWLGLISYYESVVVKRAMKKCQWSTWEDWPEGAESHRVGLFADPQIMDEYSYPGRPQIVNYFTRVIVDHYHRRNWKYVQYYLDPDSNFFLGDLFDGGRNWDDKQWIKEYTRFNQIFPKKPLRRTVMSLPGNHDIGFGDTVVESSLQRFSSYFGETSSSLDAGNHTFVLLDTISLSDKTNPNVSRVPRQFLDNFAMGSHPLPRILLTHVPLWRDPEQQTCGQLRESKEPFPIQKGHQYQTVIENDISQEILTKIQPEILFSGDDHDHCQISHSYPFQGKTKNAQEITVKSCAMNMGISRPAIQLLSLYNPSDLTMVNAGGEYASKTYQTELCYMPDPYKAIRMYLWGLLFSAAFIAYMHFFPKSFNNRVATIMNRVFTRPDGNTSDLPLPTSISKSKSKKSLTHSKYAVNDTRSIKQFLVNAIVLFVSVMPIFIYFYTVV</sequence>
<accession>P40986</accession>
<accession>D6VSG5</accession>
<feature type="chain" id="PRO_0000089444" description="Cell division control protein 1">
    <location>
        <begin position="1"/>
        <end position="491"/>
    </location>
</feature>
<feature type="topological domain" description="Cytoplasmic" evidence="2">
    <location>
        <begin position="1"/>
        <end position="39"/>
    </location>
</feature>
<feature type="transmembrane region" description="Helical" evidence="2">
    <location>
        <begin position="40"/>
        <end position="60"/>
    </location>
</feature>
<feature type="topological domain" description="Extracellular" evidence="2">
    <location>
        <begin position="61"/>
        <end position="391"/>
    </location>
</feature>
<feature type="transmembrane region" description="Helical" evidence="2">
    <location>
        <begin position="392"/>
        <end position="412"/>
    </location>
</feature>
<feature type="topological domain" description="Cytoplasmic" evidence="2">
    <location>
        <begin position="413"/>
        <end position="465"/>
    </location>
</feature>
<feature type="transmembrane region" description="Helical" evidence="2">
    <location>
        <begin position="466"/>
        <end position="486"/>
    </location>
</feature>
<feature type="topological domain" description="Extracellular" evidence="2">
    <location>
        <begin position="487"/>
        <end position="491"/>
    </location>
</feature>
<feature type="region of interest" description="Disordered" evidence="3">
    <location>
        <begin position="1"/>
        <end position="33"/>
    </location>
</feature>
<feature type="compositionally biased region" description="Basic residues" evidence="3">
    <location>
        <begin position="24"/>
        <end position="33"/>
    </location>
</feature>
<feature type="binding site" evidence="1">
    <location>
        <position position="95"/>
    </location>
    <ligand>
        <name>a divalent metal cation</name>
        <dbReference type="ChEBI" id="CHEBI:60240"/>
        <label>1</label>
    </ligand>
</feature>
<feature type="binding site" evidence="1">
    <location>
        <position position="144"/>
    </location>
    <ligand>
        <name>a divalent metal cation</name>
        <dbReference type="ChEBI" id="CHEBI:60240"/>
        <label>1</label>
    </ligand>
</feature>
<feature type="binding site" evidence="1">
    <location>
        <position position="144"/>
    </location>
    <ligand>
        <name>a divalent metal cation</name>
        <dbReference type="ChEBI" id="CHEBI:60240"/>
        <label>2</label>
    </ligand>
</feature>
<feature type="binding site" evidence="1">
    <location>
        <position position="183"/>
    </location>
    <ligand>
        <name>a divalent metal cation</name>
        <dbReference type="ChEBI" id="CHEBI:60240"/>
        <label>2</label>
    </ligand>
</feature>
<feature type="binding site" evidence="1">
    <location>
        <position position="323"/>
    </location>
    <ligand>
        <name>a divalent metal cation</name>
        <dbReference type="ChEBI" id="CHEBI:60240"/>
        <label>1</label>
    </ligand>
</feature>
<feature type="sequence conflict" description="In Ref. 1; CAA57411." evidence="5" ref="1">
    <original>P</original>
    <variation>A</variation>
    <location>
        <position position="439"/>
    </location>
</feature>
<feature type="sequence conflict" description="In Ref. 1; CAA57411." evidence="5" ref="1">
    <original>V</original>
    <variation>G</variation>
    <location>
        <position position="478"/>
    </location>
</feature>
<dbReference type="EC" id="3.1.-.-"/>
<dbReference type="EMBL" id="X81813">
    <property type="protein sequence ID" value="CAA57411.1"/>
    <property type="molecule type" value="Genomic_DNA"/>
</dbReference>
<dbReference type="EMBL" id="U15970">
    <property type="protein sequence ID" value="AAB08444.1"/>
    <property type="molecule type" value="Genomic_DNA"/>
</dbReference>
<dbReference type="EMBL" id="Z46727">
    <property type="protein sequence ID" value="CAA86689.1"/>
    <property type="molecule type" value="Genomic_DNA"/>
</dbReference>
<dbReference type="EMBL" id="BK006938">
    <property type="protein sequence ID" value="DAA12025.1"/>
    <property type="molecule type" value="Genomic_DNA"/>
</dbReference>
<dbReference type="PIR" id="S49779">
    <property type="entry name" value="S49779"/>
</dbReference>
<dbReference type="RefSeq" id="NP_010468.1">
    <property type="nucleotide sequence ID" value="NM_001180490.1"/>
</dbReference>
<dbReference type="BioGRID" id="32236">
    <property type="interactions" value="1009"/>
</dbReference>
<dbReference type="FunCoup" id="P40986">
    <property type="interactions" value="649"/>
</dbReference>
<dbReference type="IntAct" id="P40986">
    <property type="interactions" value="29"/>
</dbReference>
<dbReference type="MINT" id="P40986"/>
<dbReference type="STRING" id="4932.YDR182W"/>
<dbReference type="iPTMnet" id="P40986"/>
<dbReference type="PaxDb" id="4932-YDR182W"/>
<dbReference type="PeptideAtlas" id="P40986"/>
<dbReference type="EnsemblFungi" id="YDR182W_mRNA">
    <property type="protein sequence ID" value="YDR182W"/>
    <property type="gene ID" value="YDR182W"/>
</dbReference>
<dbReference type="GeneID" id="851763"/>
<dbReference type="KEGG" id="sce:YDR182W"/>
<dbReference type="AGR" id="SGD:S000002590"/>
<dbReference type="SGD" id="S000002590">
    <property type="gene designation" value="CDC1"/>
</dbReference>
<dbReference type="VEuPathDB" id="FungiDB:YDR182W"/>
<dbReference type="eggNOG" id="KOG3662">
    <property type="taxonomic scope" value="Eukaryota"/>
</dbReference>
<dbReference type="GeneTree" id="ENSGT00390000013236"/>
<dbReference type="HOGENOM" id="CLU_011607_0_0_1"/>
<dbReference type="InParanoid" id="P40986"/>
<dbReference type="OMA" id="LHCMKYP"/>
<dbReference type="OrthoDB" id="5977743at2759"/>
<dbReference type="BioCyc" id="YEAST:G3O-29771-MONOMER"/>
<dbReference type="BioGRID-ORCS" id="851763">
    <property type="hits" value="2 hits in 10 CRISPR screens"/>
</dbReference>
<dbReference type="PRO" id="PR:P40986"/>
<dbReference type="Proteomes" id="UP000002311">
    <property type="component" value="Chromosome IV"/>
</dbReference>
<dbReference type="RNAct" id="P40986">
    <property type="molecule type" value="protein"/>
</dbReference>
<dbReference type="GO" id="GO:0005783">
    <property type="term" value="C:endoplasmic reticulum"/>
    <property type="evidence" value="ECO:0000314"/>
    <property type="project" value="SGD"/>
</dbReference>
<dbReference type="GO" id="GO:0016020">
    <property type="term" value="C:membrane"/>
    <property type="evidence" value="ECO:0007669"/>
    <property type="project" value="UniProtKB-SubCell"/>
</dbReference>
<dbReference type="GO" id="GO:0016787">
    <property type="term" value="F:hydrolase activity"/>
    <property type="evidence" value="ECO:0007669"/>
    <property type="project" value="UniProtKB-KW"/>
</dbReference>
<dbReference type="GO" id="GO:0046872">
    <property type="term" value="F:metal ion binding"/>
    <property type="evidence" value="ECO:0007669"/>
    <property type="project" value="UniProtKB-KW"/>
</dbReference>
<dbReference type="GO" id="GO:0051301">
    <property type="term" value="P:cell division"/>
    <property type="evidence" value="ECO:0007669"/>
    <property type="project" value="UniProtKB-KW"/>
</dbReference>
<dbReference type="GO" id="GO:0006281">
    <property type="term" value="P:DNA repair"/>
    <property type="evidence" value="ECO:0000315"/>
    <property type="project" value="SGD"/>
</dbReference>
<dbReference type="GO" id="GO:0006506">
    <property type="term" value="P:GPI anchor biosynthetic process"/>
    <property type="evidence" value="ECO:0000315"/>
    <property type="project" value="SGD"/>
</dbReference>
<dbReference type="CDD" id="cd08163">
    <property type="entry name" value="MPP_Cdc1"/>
    <property type="match status" value="1"/>
</dbReference>
<dbReference type="FunFam" id="3.60.21.10:FF:000093">
    <property type="entry name" value="Cell division cycle-related protein"/>
    <property type="match status" value="1"/>
</dbReference>
<dbReference type="Gene3D" id="3.60.21.10">
    <property type="match status" value="1"/>
</dbReference>
<dbReference type="InterPro" id="IPR004843">
    <property type="entry name" value="Calcineurin-like_PHP_ApaH"/>
</dbReference>
<dbReference type="InterPro" id="IPR029052">
    <property type="entry name" value="Metallo-depent_PP-like"/>
</dbReference>
<dbReference type="InterPro" id="IPR041834">
    <property type="entry name" value="MPP_Cdc1"/>
</dbReference>
<dbReference type="InterPro" id="IPR033308">
    <property type="entry name" value="PGAP5/Cdc1/Ted1"/>
</dbReference>
<dbReference type="PANTHER" id="PTHR13315">
    <property type="entry name" value="METALLO PHOSPHOESTERASE RELATED"/>
    <property type="match status" value="1"/>
</dbReference>
<dbReference type="PANTHER" id="PTHR13315:SF4">
    <property type="entry name" value="METALLOPHOSPHOESTERASE, ISOFORM E"/>
    <property type="match status" value="1"/>
</dbReference>
<dbReference type="Pfam" id="PF00149">
    <property type="entry name" value="Metallophos"/>
    <property type="match status" value="1"/>
</dbReference>
<dbReference type="SUPFAM" id="SSF56300">
    <property type="entry name" value="Metallo-dependent phosphatases"/>
    <property type="match status" value="1"/>
</dbReference>
<proteinExistence type="evidence at protein level"/>
<comment type="function">
    <text>Probable metallophosphoesterase which may participate in recombinational repair of double -strand breaks.</text>
</comment>
<comment type="cofactor">
    <cofactor evidence="1">
        <name>a divalent metal cation</name>
        <dbReference type="ChEBI" id="CHEBI:60240"/>
    </cofactor>
    <text evidence="1">Binds 2 divalent metal cations.</text>
</comment>
<comment type="subcellular location">
    <subcellularLocation>
        <location>Membrane</location>
        <topology>Multi-pass membrane protein</topology>
    </subcellularLocation>
</comment>
<comment type="miscellaneous">
    <text evidence="4">Present with 583 molecules/cell in log phase SD medium.</text>
</comment>
<comment type="similarity">
    <text evidence="5">Belongs to the metallophosphoesterase superfamily. MPPE1 family.</text>
</comment>
<name>CDC1_YEAST</name>
<organism>
    <name type="scientific">Saccharomyces cerevisiae (strain ATCC 204508 / S288c)</name>
    <name type="common">Baker's yeast</name>
    <dbReference type="NCBI Taxonomy" id="559292"/>
    <lineage>
        <taxon>Eukaryota</taxon>
        <taxon>Fungi</taxon>
        <taxon>Dikarya</taxon>
        <taxon>Ascomycota</taxon>
        <taxon>Saccharomycotina</taxon>
        <taxon>Saccharomycetes</taxon>
        <taxon>Saccharomycetales</taxon>
        <taxon>Saccharomycetaceae</taxon>
        <taxon>Saccharomyces</taxon>
    </lineage>
</organism>
<evidence type="ECO:0000250" key="1"/>
<evidence type="ECO:0000255" key="2"/>
<evidence type="ECO:0000256" key="3">
    <source>
        <dbReference type="SAM" id="MobiDB-lite"/>
    </source>
</evidence>
<evidence type="ECO:0000269" key="4">
    <source>
    </source>
</evidence>
<evidence type="ECO:0000305" key="5"/>
<reference key="1">
    <citation type="journal article" date="1994" name="Mol. Cell. Biol.">
        <title>Mutations in the Saccharomyces cerevisiae CDC1 gene affect double-strand-break-induced intrachromosomal recombination.</title>
        <authorList>
            <person name="Halbrook J."/>
            <person name="Hoekstra M.F."/>
        </authorList>
    </citation>
    <scope>NUCLEOTIDE SEQUENCE [GENOMIC DNA]</scope>
    <source>
        <strain>S288c / YPH1</strain>
    </source>
</reference>
<reference key="2">
    <citation type="submission" date="1995-06" db="EMBL/GenBank/DDBJ databases">
        <authorList>
            <person name="Supek F."/>
            <person name="Supekova L."/>
            <person name="Nelson H."/>
            <person name="Nelson N."/>
        </authorList>
    </citation>
    <scope>NUCLEOTIDE SEQUENCE [GENOMIC DNA]</scope>
    <source>
        <strain>ATCC 200060 / W303</strain>
    </source>
</reference>
<reference key="3">
    <citation type="journal article" date="1997" name="Nature">
        <title>The nucleotide sequence of Saccharomyces cerevisiae chromosome IV.</title>
        <authorList>
            <person name="Jacq C."/>
            <person name="Alt-Moerbe J."/>
            <person name="Andre B."/>
            <person name="Arnold W."/>
            <person name="Bahr A."/>
            <person name="Ballesta J.P.G."/>
            <person name="Bargues M."/>
            <person name="Baron L."/>
            <person name="Becker A."/>
            <person name="Biteau N."/>
            <person name="Bloecker H."/>
            <person name="Blugeon C."/>
            <person name="Boskovic J."/>
            <person name="Brandt P."/>
            <person name="Brueckner M."/>
            <person name="Buitrago M.J."/>
            <person name="Coster F."/>
            <person name="Delaveau T."/>
            <person name="del Rey F."/>
            <person name="Dujon B."/>
            <person name="Eide L.G."/>
            <person name="Garcia-Cantalejo J.M."/>
            <person name="Goffeau A."/>
            <person name="Gomez-Peris A."/>
            <person name="Granotier C."/>
            <person name="Hanemann V."/>
            <person name="Hankeln T."/>
            <person name="Hoheisel J.D."/>
            <person name="Jaeger W."/>
            <person name="Jimenez A."/>
            <person name="Jonniaux J.-L."/>
            <person name="Kraemer C."/>
            <person name="Kuester H."/>
            <person name="Laamanen P."/>
            <person name="Legros Y."/>
            <person name="Louis E.J."/>
            <person name="Moeller-Rieker S."/>
            <person name="Monnet A."/>
            <person name="Moro M."/>
            <person name="Mueller-Auer S."/>
            <person name="Nussbaumer B."/>
            <person name="Paricio N."/>
            <person name="Paulin L."/>
            <person name="Perea J."/>
            <person name="Perez-Alonso M."/>
            <person name="Perez-Ortin J.E."/>
            <person name="Pohl T.M."/>
            <person name="Prydz H."/>
            <person name="Purnelle B."/>
            <person name="Rasmussen S.W."/>
            <person name="Remacha M.A."/>
            <person name="Revuelta J.L."/>
            <person name="Rieger M."/>
            <person name="Salom D."/>
            <person name="Saluz H.P."/>
            <person name="Saiz J.E."/>
            <person name="Saren A.-M."/>
            <person name="Schaefer M."/>
            <person name="Scharfe M."/>
            <person name="Schmidt E.R."/>
            <person name="Schneider C."/>
            <person name="Scholler P."/>
            <person name="Schwarz S."/>
            <person name="Soler-Mira A."/>
            <person name="Urrestarazu L.A."/>
            <person name="Verhasselt P."/>
            <person name="Vissers S."/>
            <person name="Voet M."/>
            <person name="Volckaert G."/>
            <person name="Wagner G."/>
            <person name="Wambutt R."/>
            <person name="Wedler E."/>
            <person name="Wedler H."/>
            <person name="Woelfl S."/>
            <person name="Harris D.E."/>
            <person name="Bowman S."/>
            <person name="Brown D."/>
            <person name="Churcher C.M."/>
            <person name="Connor R."/>
            <person name="Dedman K."/>
            <person name="Gentles S."/>
            <person name="Hamlin N."/>
            <person name="Hunt S."/>
            <person name="Jones L."/>
            <person name="McDonald S."/>
            <person name="Murphy L.D."/>
            <person name="Niblett D."/>
            <person name="Odell C."/>
            <person name="Oliver K."/>
            <person name="Rajandream M.A."/>
            <person name="Richards C."/>
            <person name="Shore L."/>
            <person name="Walsh S.V."/>
            <person name="Barrell B.G."/>
            <person name="Dietrich F.S."/>
            <person name="Mulligan J.T."/>
            <person name="Allen E."/>
            <person name="Araujo R."/>
            <person name="Aviles E."/>
            <person name="Berno A."/>
            <person name="Carpenter J."/>
            <person name="Chen E."/>
            <person name="Cherry J.M."/>
            <person name="Chung E."/>
            <person name="Duncan M."/>
            <person name="Hunicke-Smith S."/>
            <person name="Hyman R.W."/>
            <person name="Komp C."/>
            <person name="Lashkari D."/>
            <person name="Lew H."/>
            <person name="Lin D."/>
            <person name="Mosedale D."/>
            <person name="Nakahara K."/>
            <person name="Namath A."/>
            <person name="Oefner P."/>
            <person name="Oh C."/>
            <person name="Petel F.X."/>
            <person name="Roberts D."/>
            <person name="Schramm S."/>
            <person name="Schroeder M."/>
            <person name="Shogren T."/>
            <person name="Shroff N."/>
            <person name="Winant A."/>
            <person name="Yelton M.A."/>
            <person name="Botstein D."/>
            <person name="Davis R.W."/>
            <person name="Johnston M."/>
            <person name="Andrews S."/>
            <person name="Brinkman R."/>
            <person name="Cooper J."/>
            <person name="Ding H."/>
            <person name="Du Z."/>
            <person name="Favello A."/>
            <person name="Fulton L."/>
            <person name="Gattung S."/>
            <person name="Greco T."/>
            <person name="Hallsworth K."/>
            <person name="Hawkins J."/>
            <person name="Hillier L.W."/>
            <person name="Jier M."/>
            <person name="Johnson D."/>
            <person name="Johnston L."/>
            <person name="Kirsten J."/>
            <person name="Kucaba T."/>
            <person name="Langston Y."/>
            <person name="Latreille P."/>
            <person name="Le T."/>
            <person name="Mardis E."/>
            <person name="Menezes S."/>
            <person name="Miller N."/>
            <person name="Nhan M."/>
            <person name="Pauley A."/>
            <person name="Peluso D."/>
            <person name="Rifkin L."/>
            <person name="Riles L."/>
            <person name="Taich A."/>
            <person name="Trevaskis E."/>
            <person name="Vignati D."/>
            <person name="Wilcox L."/>
            <person name="Wohldman P."/>
            <person name="Vaudin M."/>
            <person name="Wilson R."/>
            <person name="Waterston R."/>
            <person name="Albermann K."/>
            <person name="Hani J."/>
            <person name="Heumann K."/>
            <person name="Kleine K."/>
            <person name="Mewes H.-W."/>
            <person name="Zollner A."/>
            <person name="Zaccaria P."/>
        </authorList>
    </citation>
    <scope>NUCLEOTIDE SEQUENCE [LARGE SCALE GENOMIC DNA]</scope>
    <source>
        <strain>ATCC 204508 / S288c</strain>
    </source>
</reference>
<reference key="4">
    <citation type="journal article" date="2014" name="G3 (Bethesda)">
        <title>The reference genome sequence of Saccharomyces cerevisiae: Then and now.</title>
        <authorList>
            <person name="Engel S.R."/>
            <person name="Dietrich F.S."/>
            <person name="Fisk D.G."/>
            <person name="Binkley G."/>
            <person name="Balakrishnan R."/>
            <person name="Costanzo M.C."/>
            <person name="Dwight S.S."/>
            <person name="Hitz B.C."/>
            <person name="Karra K."/>
            <person name="Nash R.S."/>
            <person name="Weng S."/>
            <person name="Wong E.D."/>
            <person name="Lloyd P."/>
            <person name="Skrzypek M.S."/>
            <person name="Miyasato S.R."/>
            <person name="Simison M."/>
            <person name="Cherry J.M."/>
        </authorList>
    </citation>
    <scope>GENOME REANNOTATION</scope>
    <source>
        <strain>ATCC 204508 / S288c</strain>
    </source>
</reference>
<reference key="5">
    <citation type="journal article" date="2003" name="Nature">
        <title>Global analysis of protein expression in yeast.</title>
        <authorList>
            <person name="Ghaemmaghami S."/>
            <person name="Huh W.-K."/>
            <person name="Bower K."/>
            <person name="Howson R.W."/>
            <person name="Belle A."/>
            <person name="Dephoure N."/>
            <person name="O'Shea E.K."/>
            <person name="Weissman J.S."/>
        </authorList>
    </citation>
    <scope>LEVEL OF PROTEIN EXPRESSION [LARGE SCALE ANALYSIS]</scope>
</reference>
<reference key="6">
    <citation type="journal article" date="2006" name="Proc. Natl. Acad. Sci. U.S.A.">
        <title>A global topology map of the Saccharomyces cerevisiae membrane proteome.</title>
        <authorList>
            <person name="Kim H."/>
            <person name="Melen K."/>
            <person name="Oesterberg M."/>
            <person name="von Heijne G."/>
        </authorList>
    </citation>
    <scope>TOPOLOGY [LARGE SCALE ANALYSIS]</scope>
    <source>
        <strain>ATCC 208353 / W303-1A</strain>
    </source>
</reference>
<gene>
    <name type="primary">CDC1</name>
    <name type="synonym">DSR1</name>
    <name type="synonym">ESP2</name>
    <name type="ordered locus">YDR182W</name>
    <name type="ORF">YD9395.16</name>
</gene>
<protein>
    <recommendedName>
        <fullName>Cell division control protein 1</fullName>
        <ecNumber>3.1.-.-</ecNumber>
    </recommendedName>
</protein>
<keyword id="KW-0131">Cell cycle</keyword>
<keyword id="KW-0132">Cell division</keyword>
<keyword id="KW-0378">Hydrolase</keyword>
<keyword id="KW-0472">Membrane</keyword>
<keyword id="KW-0479">Metal-binding</keyword>
<keyword id="KW-1185">Reference proteome</keyword>
<keyword id="KW-0812">Transmembrane</keyword>
<keyword id="KW-1133">Transmembrane helix</keyword>